<accession>Q57746</accession>
<gene>
    <name type="ordered locus">MJ0298</name>
</gene>
<dbReference type="EMBL" id="L77117">
    <property type="protein sequence ID" value="AAB98297.1"/>
    <property type="molecule type" value="Genomic_DNA"/>
</dbReference>
<dbReference type="PIR" id="C64337">
    <property type="entry name" value="C64337"/>
</dbReference>
<dbReference type="RefSeq" id="WP_010869796.1">
    <property type="nucleotide sequence ID" value="NC_000909.1"/>
</dbReference>
<dbReference type="SMR" id="Q57746"/>
<dbReference type="STRING" id="243232.MJ_0298"/>
<dbReference type="PaxDb" id="243232-MJ_0298"/>
<dbReference type="EnsemblBacteria" id="AAB98297">
    <property type="protein sequence ID" value="AAB98297"/>
    <property type="gene ID" value="MJ_0298"/>
</dbReference>
<dbReference type="GeneID" id="1451153"/>
<dbReference type="KEGG" id="mja:MJ_0298"/>
<dbReference type="eggNOG" id="arCOG00519">
    <property type="taxonomic scope" value="Archaea"/>
</dbReference>
<dbReference type="HOGENOM" id="CLU_105338_0_0_2"/>
<dbReference type="InParanoid" id="Q57746"/>
<dbReference type="OrthoDB" id="63875at2157"/>
<dbReference type="PhylomeDB" id="Q57746"/>
<dbReference type="Proteomes" id="UP000000805">
    <property type="component" value="Chromosome"/>
</dbReference>
<dbReference type="GO" id="GO:0010181">
    <property type="term" value="F:FMN binding"/>
    <property type="evidence" value="ECO:0000318"/>
    <property type="project" value="GO_Central"/>
</dbReference>
<dbReference type="GO" id="GO:0070819">
    <property type="term" value="F:menaquinone-dependent protoporphyrinogen oxidase activity"/>
    <property type="evidence" value="ECO:0000318"/>
    <property type="project" value="GO_Central"/>
</dbReference>
<dbReference type="GO" id="GO:0006783">
    <property type="term" value="P:heme biosynthetic process"/>
    <property type="evidence" value="ECO:0000318"/>
    <property type="project" value="GO_Central"/>
</dbReference>
<dbReference type="Gene3D" id="3.40.50.360">
    <property type="match status" value="1"/>
</dbReference>
<dbReference type="InterPro" id="IPR008254">
    <property type="entry name" value="Flavodoxin/NO_synth"/>
</dbReference>
<dbReference type="InterPro" id="IPR026816">
    <property type="entry name" value="Flavodoxin_dom"/>
</dbReference>
<dbReference type="InterPro" id="IPR029039">
    <property type="entry name" value="Flavoprotein-like_sf"/>
</dbReference>
<dbReference type="InterPro" id="IPR052200">
    <property type="entry name" value="Protoporphyrinogen_IX_DH"/>
</dbReference>
<dbReference type="PANTHER" id="PTHR38030">
    <property type="entry name" value="PROTOPORPHYRINOGEN IX DEHYDROGENASE [MENAQUINONE]"/>
    <property type="match status" value="1"/>
</dbReference>
<dbReference type="PANTHER" id="PTHR38030:SF2">
    <property type="entry name" value="PROTOPORPHYRINOGEN IX DEHYDROGENASE [QUINONE]"/>
    <property type="match status" value="1"/>
</dbReference>
<dbReference type="Pfam" id="PF12724">
    <property type="entry name" value="Flavodoxin_5"/>
    <property type="match status" value="1"/>
</dbReference>
<dbReference type="SUPFAM" id="SSF52218">
    <property type="entry name" value="Flavoproteins"/>
    <property type="match status" value="1"/>
</dbReference>
<dbReference type="PROSITE" id="PS50902">
    <property type="entry name" value="FLAVODOXIN_LIKE"/>
    <property type="match status" value="1"/>
</dbReference>
<evidence type="ECO:0000255" key="1">
    <source>
        <dbReference type="PROSITE-ProRule" id="PRU00088"/>
    </source>
</evidence>
<proteinExistence type="predicted"/>
<reference key="1">
    <citation type="journal article" date="1996" name="Science">
        <title>Complete genome sequence of the methanogenic archaeon, Methanococcus jannaschii.</title>
        <authorList>
            <person name="Bult C.J."/>
            <person name="White O."/>
            <person name="Olsen G.J."/>
            <person name="Zhou L."/>
            <person name="Fleischmann R.D."/>
            <person name="Sutton G.G."/>
            <person name="Blake J.A."/>
            <person name="FitzGerald L.M."/>
            <person name="Clayton R.A."/>
            <person name="Gocayne J.D."/>
            <person name="Kerlavage A.R."/>
            <person name="Dougherty B.A."/>
            <person name="Tomb J.-F."/>
            <person name="Adams M.D."/>
            <person name="Reich C.I."/>
            <person name="Overbeek R."/>
            <person name="Kirkness E.F."/>
            <person name="Weinstock K.G."/>
            <person name="Merrick J.M."/>
            <person name="Glodek A."/>
            <person name="Scott J.L."/>
            <person name="Geoghagen N.S.M."/>
            <person name="Weidman J.F."/>
            <person name="Fuhrmann J.L."/>
            <person name="Nguyen D."/>
            <person name="Utterback T.R."/>
            <person name="Kelley J.M."/>
            <person name="Peterson J.D."/>
            <person name="Sadow P.W."/>
            <person name="Hanna M.C."/>
            <person name="Cotton M.D."/>
            <person name="Roberts K.M."/>
            <person name="Hurst M.A."/>
            <person name="Kaine B.P."/>
            <person name="Borodovsky M."/>
            <person name="Klenk H.-P."/>
            <person name="Fraser C.M."/>
            <person name="Smith H.O."/>
            <person name="Woese C.R."/>
            <person name="Venter J.C."/>
        </authorList>
    </citation>
    <scope>NUCLEOTIDE SEQUENCE [LARGE SCALE GENOMIC DNA]</scope>
    <source>
        <strain>ATCC 43067 / DSM 2661 / JAL-1 / JCM 10045 / NBRC 100440</strain>
    </source>
</reference>
<name>Y298_METJA</name>
<keyword id="KW-1185">Reference proteome</keyword>
<feature type="chain" id="PRO_0000106781" description="Uncharacterized protein MJ0298">
    <location>
        <begin position="1"/>
        <end position="150"/>
    </location>
</feature>
<feature type="domain" description="Flavodoxin-like" evidence="1">
    <location>
        <begin position="4"/>
        <end position="148"/>
    </location>
</feature>
<protein>
    <recommendedName>
        <fullName>Uncharacterized protein MJ0298</fullName>
    </recommendedName>
</protein>
<sequence length="150" mass="17228">MKALILYKSIHHKNTEKIAKTIADELNADIYNIDKVSPDIIENYDLIGFGSGIYFGKHHKSIFKFLDKISKTNKKAFIFSTAGFPFLKSMFHKELRDKLKSKGFEILGEFCCKGYHTYGIFKLFGGLNKNHPNEDDIKKAKEFAKSILKN</sequence>
<organism>
    <name type="scientific">Methanocaldococcus jannaschii (strain ATCC 43067 / DSM 2661 / JAL-1 / JCM 10045 / NBRC 100440)</name>
    <name type="common">Methanococcus jannaschii</name>
    <dbReference type="NCBI Taxonomy" id="243232"/>
    <lineage>
        <taxon>Archaea</taxon>
        <taxon>Methanobacteriati</taxon>
        <taxon>Methanobacteriota</taxon>
        <taxon>Methanomada group</taxon>
        <taxon>Methanococci</taxon>
        <taxon>Methanococcales</taxon>
        <taxon>Methanocaldococcaceae</taxon>
        <taxon>Methanocaldococcus</taxon>
    </lineage>
</organism>